<evidence type="ECO:0000255" key="1">
    <source>
        <dbReference type="HAMAP-Rule" id="MF_01701"/>
    </source>
</evidence>
<evidence type="ECO:0000305" key="2"/>
<feature type="chain" id="PRO_0000092307" description="Probable sulfate/thiosulfate import ATP-binding protein CysA">
    <location>
        <begin position="1"/>
        <end position="236"/>
    </location>
</feature>
<feature type="domain" description="ABC transporter" evidence="1">
    <location>
        <begin position="3"/>
        <end position="233"/>
    </location>
</feature>
<feature type="binding site" evidence="1">
    <location>
        <begin position="35"/>
        <end position="42"/>
    </location>
    <ligand>
        <name>ATP</name>
        <dbReference type="ChEBI" id="CHEBI:30616"/>
    </ligand>
</feature>
<dbReference type="EC" id="7.3.2.3" evidence="1"/>
<dbReference type="EMBL" id="AB001684">
    <property type="protein sequence ID" value="BAA57907.1"/>
    <property type="molecule type" value="Genomic_DNA"/>
</dbReference>
<dbReference type="PIR" id="T07260">
    <property type="entry name" value="T07260"/>
</dbReference>
<dbReference type="RefSeq" id="NP_045832.1">
    <property type="nucleotide sequence ID" value="NC_001865.1"/>
</dbReference>
<dbReference type="SMR" id="P56344"/>
<dbReference type="GeneID" id="809122"/>
<dbReference type="GO" id="GO:0043190">
    <property type="term" value="C:ATP-binding cassette (ABC) transporter complex"/>
    <property type="evidence" value="ECO:0007669"/>
    <property type="project" value="InterPro"/>
</dbReference>
<dbReference type="GO" id="GO:0009507">
    <property type="term" value="C:chloroplast"/>
    <property type="evidence" value="ECO:0007669"/>
    <property type="project" value="UniProtKB-SubCell"/>
</dbReference>
<dbReference type="GO" id="GO:0015419">
    <property type="term" value="F:ABC-type sulfate transporter activity"/>
    <property type="evidence" value="ECO:0007669"/>
    <property type="project" value="InterPro"/>
</dbReference>
<dbReference type="GO" id="GO:0102025">
    <property type="term" value="F:ABC-type thiosulfate transporter activity"/>
    <property type="evidence" value="ECO:0007669"/>
    <property type="project" value="RHEA"/>
</dbReference>
<dbReference type="GO" id="GO:0005524">
    <property type="term" value="F:ATP binding"/>
    <property type="evidence" value="ECO:0007669"/>
    <property type="project" value="UniProtKB-KW"/>
</dbReference>
<dbReference type="GO" id="GO:0016887">
    <property type="term" value="F:ATP hydrolysis activity"/>
    <property type="evidence" value="ECO:0007669"/>
    <property type="project" value="InterPro"/>
</dbReference>
<dbReference type="CDD" id="cd03296">
    <property type="entry name" value="ABC_CysA_sulfate_importer"/>
    <property type="match status" value="1"/>
</dbReference>
<dbReference type="FunFam" id="3.40.50.300:FF:000425">
    <property type="entry name" value="Probable ABC transporter, ATP-binding subunit"/>
    <property type="match status" value="1"/>
</dbReference>
<dbReference type="Gene3D" id="3.40.50.300">
    <property type="entry name" value="P-loop containing nucleotide triphosphate hydrolases"/>
    <property type="match status" value="1"/>
</dbReference>
<dbReference type="InterPro" id="IPR003593">
    <property type="entry name" value="AAA+_ATPase"/>
</dbReference>
<dbReference type="InterPro" id="IPR050093">
    <property type="entry name" value="ABC_SmlMolc_Importer"/>
</dbReference>
<dbReference type="InterPro" id="IPR003439">
    <property type="entry name" value="ABC_transporter-like_ATP-bd"/>
</dbReference>
<dbReference type="InterPro" id="IPR017871">
    <property type="entry name" value="ABC_transporter-like_CS"/>
</dbReference>
<dbReference type="InterPro" id="IPR027417">
    <property type="entry name" value="P-loop_NTPase"/>
</dbReference>
<dbReference type="InterPro" id="IPR005666">
    <property type="entry name" value="Sulph_transpt1"/>
</dbReference>
<dbReference type="NCBIfam" id="TIGR00968">
    <property type="entry name" value="3a0106s01"/>
    <property type="match status" value="1"/>
</dbReference>
<dbReference type="PANTHER" id="PTHR42781">
    <property type="entry name" value="SPERMIDINE/PUTRESCINE IMPORT ATP-BINDING PROTEIN POTA"/>
    <property type="match status" value="1"/>
</dbReference>
<dbReference type="PANTHER" id="PTHR42781:SF4">
    <property type="entry name" value="SPERMIDINE_PUTRESCINE IMPORT ATP-BINDING PROTEIN POTA"/>
    <property type="match status" value="1"/>
</dbReference>
<dbReference type="Pfam" id="PF00005">
    <property type="entry name" value="ABC_tran"/>
    <property type="match status" value="1"/>
</dbReference>
<dbReference type="SMART" id="SM00382">
    <property type="entry name" value="AAA"/>
    <property type="match status" value="1"/>
</dbReference>
<dbReference type="SUPFAM" id="SSF52540">
    <property type="entry name" value="P-loop containing nucleoside triphosphate hydrolases"/>
    <property type="match status" value="1"/>
</dbReference>
<dbReference type="PROSITE" id="PS00211">
    <property type="entry name" value="ABC_TRANSPORTER_1"/>
    <property type="match status" value="1"/>
</dbReference>
<dbReference type="PROSITE" id="PS50893">
    <property type="entry name" value="ABC_TRANSPORTER_2"/>
    <property type="match status" value="1"/>
</dbReference>
<accession>P56344</accession>
<gene>
    <name evidence="1" type="primary">cysA</name>
</gene>
<keyword id="KW-0067">ATP-binding</keyword>
<keyword id="KW-0150">Chloroplast</keyword>
<keyword id="KW-0547">Nucleotide-binding</keyword>
<keyword id="KW-0934">Plastid</keyword>
<keyword id="KW-0764">Sulfate transport</keyword>
<keyword id="KW-1278">Translocase</keyword>
<keyword id="KW-0813">Transport</keyword>
<geneLocation type="chloroplast"/>
<proteinExistence type="inferred from homology"/>
<name>CYSA_CHLVU</name>
<organism>
    <name type="scientific">Chlorella vulgaris</name>
    <name type="common">Green alga</name>
    <dbReference type="NCBI Taxonomy" id="3077"/>
    <lineage>
        <taxon>Eukaryota</taxon>
        <taxon>Viridiplantae</taxon>
        <taxon>Chlorophyta</taxon>
        <taxon>core chlorophytes</taxon>
        <taxon>Trebouxiophyceae</taxon>
        <taxon>Chlorellales</taxon>
        <taxon>Chlorellaceae</taxon>
        <taxon>Chlorella clade</taxon>
        <taxon>Chlorella</taxon>
    </lineage>
</organism>
<reference key="1">
    <citation type="journal article" date="1997" name="Proc. Natl. Acad. Sci. U.S.A.">
        <title>Complete nucleotide sequence of the chloroplast genome from the green alga Chlorella vulgaris: the existence of genes possibly involved in chloroplast division.</title>
        <authorList>
            <person name="Wakasugi T."/>
            <person name="Nagai T."/>
            <person name="Kapoor M."/>
            <person name="Sugita M."/>
            <person name="Ito M."/>
            <person name="Ito S."/>
            <person name="Tsudzuki J."/>
            <person name="Nakashima K."/>
            <person name="Tsudzuki T."/>
            <person name="Suzuki Y."/>
            <person name="Hamada A."/>
            <person name="Ohta T."/>
            <person name="Inamura A."/>
            <person name="Yoshinaga K."/>
            <person name="Sugiura M."/>
        </authorList>
    </citation>
    <scope>NUCLEOTIDE SEQUENCE [LARGE SCALE GENOMIC DNA]</scope>
    <source>
        <strain>IAM C-27 / Tamiya</strain>
    </source>
</reference>
<sequence>MSILIENISKRFGSFQALDRVNLEIKNGSLVGLLGPSGSGKSTLLRVLAGLEKPDSGRIWLEGQDATQMKLQDREIGFVFQNYALFPHLTVSENVAFGLEIQKIDSLLKKKRVNELLKLMQLEKFGDSYPNQLSGGQRQRVALARALAMEPKVLLLDEPFAALDAKIRKQLRSWLRELHHKISVTTVFVTHDYSEAMELAQEIVLLENGKIIQIGSAQELSDHPTNTFVTNFLGLK</sequence>
<protein>
    <recommendedName>
        <fullName>Probable sulfate/thiosulfate import ATP-binding protein CysA</fullName>
        <ecNumber evidence="1">7.3.2.3</ecNumber>
    </recommendedName>
    <alternativeName>
        <fullName evidence="1">Sulfate-transporting ATPase</fullName>
    </alternativeName>
</protein>
<comment type="function">
    <text evidence="1">Part of the ABC transporter complex involved in sulfate/thiosulfate import. Responsible for energy coupling to the transport system.</text>
</comment>
<comment type="catalytic activity">
    <reaction evidence="1">
        <text>sulfate(out) + ATP + H2O = sulfate(in) + ADP + phosphate + H(+)</text>
        <dbReference type="Rhea" id="RHEA:10192"/>
        <dbReference type="ChEBI" id="CHEBI:15377"/>
        <dbReference type="ChEBI" id="CHEBI:15378"/>
        <dbReference type="ChEBI" id="CHEBI:16189"/>
        <dbReference type="ChEBI" id="CHEBI:30616"/>
        <dbReference type="ChEBI" id="CHEBI:43474"/>
        <dbReference type="ChEBI" id="CHEBI:456216"/>
        <dbReference type="EC" id="7.3.2.3"/>
    </reaction>
</comment>
<comment type="catalytic activity">
    <reaction evidence="1">
        <text>thiosulfate(out) + ATP + H2O = thiosulfate(in) + ADP + phosphate + H(+)</text>
        <dbReference type="Rhea" id="RHEA:29871"/>
        <dbReference type="ChEBI" id="CHEBI:15377"/>
        <dbReference type="ChEBI" id="CHEBI:15378"/>
        <dbReference type="ChEBI" id="CHEBI:30616"/>
        <dbReference type="ChEBI" id="CHEBI:33542"/>
        <dbReference type="ChEBI" id="CHEBI:43474"/>
        <dbReference type="ChEBI" id="CHEBI:456216"/>
        <dbReference type="EC" id="7.3.2.3"/>
    </reaction>
</comment>
<comment type="subcellular location">
    <subcellularLocation>
        <location>Plastid</location>
        <location>Chloroplast</location>
    </subcellularLocation>
</comment>
<comment type="similarity">
    <text evidence="1">Belongs to the ABC transporter superfamily. Sulfate/tungstate importer (TC 3.A.1.6) family.</text>
</comment>
<comment type="caution">
    <text evidence="2">Seems to be truncated compared to other members of this subfamily.</text>
</comment>